<accession>E8MF12</accession>
<accession>A7BJ81</accession>
<dbReference type="EC" id="2.7.1.162"/>
<dbReference type="EMBL" id="AB303839">
    <property type="protein sequence ID" value="BAF73925.1"/>
    <property type="molecule type" value="Genomic_DNA"/>
</dbReference>
<dbReference type="EMBL" id="AP010888">
    <property type="protein sequence ID" value="BAJ67289.1"/>
    <property type="molecule type" value="Genomic_DNA"/>
</dbReference>
<dbReference type="RefSeq" id="WP_013582917.1">
    <property type="nucleotide sequence ID" value="NC_015067.1"/>
</dbReference>
<dbReference type="PDB" id="4OCJ">
    <property type="method" value="X-ray"/>
    <property type="resolution" value="1.57 A"/>
    <property type="chains" value="A=1-359"/>
</dbReference>
<dbReference type="PDB" id="4OCK">
    <property type="method" value="X-ray"/>
    <property type="resolution" value="1.72 A"/>
    <property type="chains" value="A=1-359"/>
</dbReference>
<dbReference type="PDB" id="4OCO">
    <property type="method" value="X-ray"/>
    <property type="resolution" value="2.16 A"/>
    <property type="chains" value="A=1-359"/>
</dbReference>
<dbReference type="PDB" id="4OCP">
    <property type="method" value="X-ray"/>
    <property type="resolution" value="1.94 A"/>
    <property type="chains" value="A=1-359"/>
</dbReference>
<dbReference type="PDB" id="4OCQ">
    <property type="method" value="X-ray"/>
    <property type="resolution" value="1.88 A"/>
    <property type="chains" value="A=1-359"/>
</dbReference>
<dbReference type="PDB" id="4WH1">
    <property type="method" value="X-ray"/>
    <property type="resolution" value="2.05 A"/>
    <property type="chains" value="A=1-359"/>
</dbReference>
<dbReference type="PDB" id="4WH2">
    <property type="method" value="X-ray"/>
    <property type="resolution" value="1.85 A"/>
    <property type="chains" value="A=1-359"/>
</dbReference>
<dbReference type="PDB" id="4WH3">
    <property type="method" value="X-ray"/>
    <property type="resolution" value="1.80 A"/>
    <property type="chains" value="A=1-359"/>
</dbReference>
<dbReference type="PDBsum" id="4OCJ"/>
<dbReference type="PDBsum" id="4OCK"/>
<dbReference type="PDBsum" id="4OCO"/>
<dbReference type="PDBsum" id="4OCP"/>
<dbReference type="PDBsum" id="4OCQ"/>
<dbReference type="PDBsum" id="4WH1"/>
<dbReference type="PDBsum" id="4WH2"/>
<dbReference type="PDBsum" id="4WH3"/>
<dbReference type="SMR" id="E8MF12"/>
<dbReference type="GeneID" id="69578838"/>
<dbReference type="KEGG" id="blm:BLLJ_1622"/>
<dbReference type="HOGENOM" id="CLU_037718_0_0_11"/>
<dbReference type="BioCyc" id="MetaCyc:MONOMER-13865"/>
<dbReference type="BRENDA" id="2.7.1.162">
    <property type="organism ID" value="851"/>
</dbReference>
<dbReference type="EvolutionaryTrace" id="E8MF12"/>
<dbReference type="GO" id="GO:0005524">
    <property type="term" value="F:ATP binding"/>
    <property type="evidence" value="ECO:0007669"/>
    <property type="project" value="UniProtKB-KW"/>
</dbReference>
<dbReference type="GO" id="GO:0016301">
    <property type="term" value="F:kinase activity"/>
    <property type="evidence" value="ECO:0007669"/>
    <property type="project" value="UniProtKB-KW"/>
</dbReference>
<dbReference type="GO" id="GO:0016773">
    <property type="term" value="F:phosphotransferase activity, alcohol group as acceptor"/>
    <property type="evidence" value="ECO:0000314"/>
    <property type="project" value="UniProtKB"/>
</dbReference>
<dbReference type="GO" id="GO:0005975">
    <property type="term" value="P:carbohydrate metabolic process"/>
    <property type="evidence" value="ECO:0000314"/>
    <property type="project" value="UniProtKB"/>
</dbReference>
<dbReference type="Gene3D" id="3.90.1200.10">
    <property type="match status" value="1"/>
</dbReference>
<dbReference type="Gene3D" id="3.30.200.20">
    <property type="entry name" value="Phosphorylase Kinase, domain 1"/>
    <property type="match status" value="1"/>
</dbReference>
<dbReference type="InterPro" id="IPR002575">
    <property type="entry name" value="Aminoglycoside_PTrfase"/>
</dbReference>
<dbReference type="InterPro" id="IPR011009">
    <property type="entry name" value="Kinase-like_dom_sf"/>
</dbReference>
<dbReference type="InterPro" id="IPR050249">
    <property type="entry name" value="Pseudomonas-type_ThrB"/>
</dbReference>
<dbReference type="PANTHER" id="PTHR21064">
    <property type="entry name" value="AMINOGLYCOSIDE PHOSPHOTRANSFERASE DOMAIN-CONTAINING PROTEIN-RELATED"/>
    <property type="match status" value="1"/>
</dbReference>
<dbReference type="PANTHER" id="PTHR21064:SF5">
    <property type="entry name" value="SLR1880 PROTEIN"/>
    <property type="match status" value="1"/>
</dbReference>
<dbReference type="Pfam" id="PF01636">
    <property type="entry name" value="APH"/>
    <property type="match status" value="1"/>
</dbReference>
<dbReference type="SUPFAM" id="SSF56112">
    <property type="entry name" value="Protein kinase-like (PK-like)"/>
    <property type="match status" value="1"/>
</dbReference>
<organism>
    <name type="scientific">Bifidobacterium longum subsp. longum (strain ATCC 15707 / DSM 20219 / JCM 1217 / NCTC 11818 / E194b)</name>
    <dbReference type="NCBI Taxonomy" id="565042"/>
    <lineage>
        <taxon>Bacteria</taxon>
        <taxon>Bacillati</taxon>
        <taxon>Actinomycetota</taxon>
        <taxon>Actinomycetes</taxon>
        <taxon>Bifidobacteriales</taxon>
        <taxon>Bifidobacteriaceae</taxon>
        <taxon>Bifidobacterium</taxon>
    </lineage>
</organism>
<sequence length="359" mass="39903">MTESNEDLFGIASHFALEGAVTGIEPYGDGHINTTYLVTTDGPRYILQQMNTSIFPDTVNLMRNVELVTSTLKAQGKETLDIVPTTSGATWAEIDGGAWRVYKFIEHTVSYNLVPNPDVFREAGSAFGDFQNFLSEFDASQLTETIAHFHDTPHRFEDFKAALAADKLGRAAACQPEIDFYLSHADQYAVVMDGLRDGSIPLRVTHNDTKLNNILMDATTGKARAIIDLDTIMPGSMLFDFGDSIRFGASTALEDEKDLSKVHFSTELFRAYTEGFVGELRGSITAREAELLPFSGNLLTMECGMRFLADYLEGDIYFATKYPEHNLVRTRTQIKLVQEMEQKASETRAIVADIMEAAR</sequence>
<evidence type="ECO:0000269" key="1">
    <source>
    </source>
</evidence>
<evidence type="ECO:0000269" key="2">
    <source>
    </source>
</evidence>
<evidence type="ECO:0000269" key="3">
    <source>
    </source>
</evidence>
<evidence type="ECO:0000305" key="4"/>
<evidence type="ECO:0007829" key="5">
    <source>
        <dbReference type="PDB" id="4OCJ"/>
    </source>
</evidence>
<evidence type="ECO:0007829" key="6">
    <source>
        <dbReference type="PDB" id="4OCK"/>
    </source>
</evidence>
<proteinExistence type="evidence at protein level"/>
<keyword id="KW-0002">3D-structure</keyword>
<keyword id="KW-0067">ATP-binding</keyword>
<keyword id="KW-0119">Carbohydrate metabolism</keyword>
<keyword id="KW-0418">Kinase</keyword>
<keyword id="KW-0460">Magnesium</keyword>
<keyword id="KW-0547">Nucleotide-binding</keyword>
<keyword id="KW-0808">Transferase</keyword>
<comment type="function">
    <text evidence="1 2 3">Phosphorylates both N-acetylglucosamine (GlcNAc) and N-acetylgalactosamine (GalNAc) at similar rates. Involved in the lacto-N-biose I/galacto-N-biose (LNB/GNB) degradation pathway, which is important for host intestinal colonization by bifidobacteria. Also accepts GTP and ITP as phosphate donors. In vitro, can phosphorylate several GlcNAc and GalNAc derivatives.</text>
</comment>
<comment type="catalytic activity">
    <reaction evidence="1 2 3">
        <text>N-acetyl-D-hexosamine + ATP = N-acetyl-alpha-D-hexosamine 1-phosphate + ADP + H(+)</text>
        <dbReference type="Rhea" id="RHEA:25428"/>
        <dbReference type="ChEBI" id="CHEBI:15378"/>
        <dbReference type="ChEBI" id="CHEBI:21601"/>
        <dbReference type="ChEBI" id="CHEBI:30616"/>
        <dbReference type="ChEBI" id="CHEBI:138007"/>
        <dbReference type="ChEBI" id="CHEBI:456216"/>
        <dbReference type="EC" id="2.7.1.162"/>
    </reaction>
</comment>
<comment type="cofactor">
    <cofactor evidence="1">
        <name>Mg(2+)</name>
        <dbReference type="ChEBI" id="CHEBI:18420"/>
    </cofactor>
</comment>
<comment type="biophysicochemical properties">
    <kinetics>
        <KM evidence="1">0.118 mM for GlcNAc</KM>
        <KM evidence="1">0.065 mM for GalNAc</KM>
        <KM evidence="1">0.172 mM for ATP</KM>
        <text>kcat is 1.21 sec(-1) for GlcNAc. kcat is 0.752 sec(-1) for GalNAc.</text>
    </kinetics>
    <phDependence>
        <text evidence="1">Optimum pH is 8.5. Stable at pH 5.0 to 9.5 at 30 degrees Celsius.</text>
    </phDependence>
    <temperatureDependence>
        <text evidence="1">Optimum temperature is 40 degrees Celsius.</text>
    </temperatureDependence>
</comment>
<comment type="similarity">
    <text evidence="4">Belongs to the protein kinase superfamily.</text>
</comment>
<reference key="1">
    <citation type="journal article" date="2007" name="Appl. Environ. Microbiol.">
        <title>Identification of N-acetylhexosamine 1-kinase in the complete lacto-N-biose I/galacto-N-biose metabolic pathway in Bifidobacterium longum.</title>
        <authorList>
            <person name="Nishimoto M."/>
            <person name="Kitaoka M."/>
        </authorList>
    </citation>
    <scope>NUCLEOTIDE SEQUENCE [GENOMIC DNA]</scope>
    <scope>FUNCTION</scope>
    <scope>CATALYTIC ACTIVITY</scope>
    <scope>COFACTOR</scope>
    <scope>BIOPHYSICOCHEMICAL PROPERTIES</scope>
    <scope>GENE NAME</scope>
    <source>
        <strain>ATCC 15707 / DSM 20219 / CCUG 28903 / JCM 1217 / NCIMB 702259 / NCTC 11818 / E194b</strain>
    </source>
</reference>
<reference key="2">
    <citation type="journal article" date="2011" name="Nature">
        <title>Bifidobacteria can protect from enteropathogenic infection through production of acetate.</title>
        <authorList>
            <person name="Fukuda S."/>
            <person name="Toh H."/>
            <person name="Hase K."/>
            <person name="Oshima K."/>
            <person name="Nakanishi Y."/>
            <person name="Yoshimura K."/>
            <person name="Tobe T."/>
            <person name="Clarke J.M."/>
            <person name="Topping D.L."/>
            <person name="Suzuki T."/>
            <person name="Taylor T.D."/>
            <person name="Itoh K."/>
            <person name="Kikuchi J."/>
            <person name="Morita H."/>
            <person name="Hattori M."/>
            <person name="Ohno H."/>
        </authorList>
    </citation>
    <scope>NUCLEOTIDE SEQUENCE [LARGE SCALE GENOMIC DNA]</scope>
    <source>
        <strain>ATCC 15707 / DSM 20219 / CCUG 28903 / JCM 1217 / NCIMB 702259 / NCTC 11818 / E194b</strain>
    </source>
</reference>
<reference key="3">
    <citation type="journal article" date="2009" name="Bioorg. Med. Chem. Lett.">
        <title>Substrate specificity of N-acetylhexosamine kinase towards N-acetylgalactosamine derivatives.</title>
        <authorList>
            <person name="Cai L."/>
            <person name="Guan W."/>
            <person name="Wang W."/>
            <person name="Zhao W."/>
            <person name="Kitaoka M."/>
            <person name="Shen J."/>
            <person name="O'Neil C."/>
            <person name="Wang P.G."/>
        </authorList>
    </citation>
    <scope>FUNCTION</scope>
    <scope>CATALYTIC ACTIVITY</scope>
</reference>
<reference key="4">
    <citation type="journal article" date="2009" name="Chem. Commun. (Camb.)">
        <title>A chemoenzymatic route to N-acetylglucosamine-1-phosphate analogues: substrate specificity investigations of N-acetylhexosamine 1-kinase.</title>
        <authorList>
            <person name="Cai L."/>
            <person name="Guan W."/>
            <person name="Kitaoka M."/>
            <person name="Shen J."/>
            <person name="Xia C."/>
            <person name="Chen W."/>
            <person name="Wang P.G."/>
        </authorList>
    </citation>
    <scope>FUNCTION</scope>
    <scope>CATALYTIC ACTIVITY</scope>
</reference>
<feature type="chain" id="PRO_0000424071" description="N-acetylhexosamine 1-kinase">
    <location>
        <begin position="1"/>
        <end position="359"/>
    </location>
</feature>
<feature type="domain" description="Protein kinase">
    <location>
        <begin position="21"/>
        <end position="359"/>
    </location>
</feature>
<feature type="sequence conflict" description="In Ref. 1; BAF73925." evidence="4" ref="1">
    <original>D</original>
    <variation>V</variation>
    <location>
        <position position="7"/>
    </location>
</feature>
<feature type="helix" evidence="5">
    <location>
        <begin position="5"/>
        <end position="12"/>
    </location>
</feature>
<feature type="strand" evidence="5">
    <location>
        <begin position="21"/>
        <end position="26"/>
    </location>
</feature>
<feature type="strand" evidence="5">
    <location>
        <begin position="31"/>
        <end position="42"/>
    </location>
</feature>
<feature type="strand" evidence="5">
    <location>
        <begin position="45"/>
        <end position="50"/>
    </location>
</feature>
<feature type="turn" evidence="5">
    <location>
        <begin position="52"/>
        <end position="54"/>
    </location>
</feature>
<feature type="helix" evidence="5">
    <location>
        <begin position="58"/>
        <end position="73"/>
    </location>
</feature>
<feature type="turn" evidence="5">
    <location>
        <begin position="74"/>
        <end position="76"/>
    </location>
</feature>
<feature type="strand" evidence="5">
    <location>
        <begin position="90"/>
        <end position="94"/>
    </location>
</feature>
<feature type="strand" evidence="5">
    <location>
        <begin position="97"/>
        <end position="103"/>
    </location>
</feature>
<feature type="strand" evidence="5">
    <location>
        <begin position="107"/>
        <end position="109"/>
    </location>
</feature>
<feature type="helix" evidence="5">
    <location>
        <begin position="117"/>
        <end position="134"/>
    </location>
</feature>
<feature type="helix" evidence="5">
    <location>
        <begin position="139"/>
        <end position="141"/>
    </location>
</feature>
<feature type="turn" evidence="5">
    <location>
        <begin position="147"/>
        <end position="150"/>
    </location>
</feature>
<feature type="helix" evidence="5">
    <location>
        <begin position="152"/>
        <end position="165"/>
    </location>
</feature>
<feature type="helix" evidence="5">
    <location>
        <begin position="171"/>
        <end position="174"/>
    </location>
</feature>
<feature type="helix" evidence="5">
    <location>
        <begin position="175"/>
        <end position="183"/>
    </location>
</feature>
<feature type="helix" evidence="5">
    <location>
        <begin position="185"/>
        <end position="187"/>
    </location>
</feature>
<feature type="helix" evidence="5">
    <location>
        <begin position="190"/>
        <end position="196"/>
    </location>
</feature>
<feature type="strand" evidence="6">
    <location>
        <begin position="198"/>
        <end position="200"/>
    </location>
</feature>
<feature type="strand" evidence="5">
    <location>
        <begin position="203"/>
        <end position="205"/>
    </location>
</feature>
<feature type="helix" evidence="5">
    <location>
        <begin position="211"/>
        <end position="213"/>
    </location>
</feature>
<feature type="strand" evidence="5">
    <location>
        <begin position="214"/>
        <end position="217"/>
    </location>
</feature>
<feature type="turn" evidence="5">
    <location>
        <begin position="218"/>
        <end position="220"/>
    </location>
</feature>
<feature type="strand" evidence="5">
    <location>
        <begin position="222"/>
        <end position="226"/>
    </location>
</feature>
<feature type="helix" evidence="6">
    <location>
        <begin position="229"/>
        <end position="231"/>
    </location>
</feature>
<feature type="strand" evidence="5">
    <location>
        <begin position="233"/>
        <end position="235"/>
    </location>
</feature>
<feature type="helix" evidence="5">
    <location>
        <begin position="237"/>
        <end position="248"/>
    </location>
</feature>
<feature type="strand" evidence="5">
    <location>
        <begin position="249"/>
        <end position="252"/>
    </location>
</feature>
<feature type="helix" evidence="5">
    <location>
        <begin position="259"/>
        <end position="261"/>
    </location>
</feature>
<feature type="helix" evidence="5">
    <location>
        <begin position="266"/>
        <end position="280"/>
    </location>
</feature>
<feature type="turn" evidence="5">
    <location>
        <begin position="281"/>
        <end position="283"/>
    </location>
</feature>
<feature type="helix" evidence="5">
    <location>
        <begin position="286"/>
        <end position="313"/>
    </location>
</feature>
<feature type="strand" evidence="6">
    <location>
        <begin position="315"/>
        <end position="318"/>
    </location>
</feature>
<feature type="helix" evidence="5">
    <location>
        <begin position="325"/>
        <end position="342"/>
    </location>
</feature>
<feature type="helix" evidence="5">
    <location>
        <begin position="344"/>
        <end position="354"/>
    </location>
</feature>
<name>NAHK_BIFL2</name>
<protein>
    <recommendedName>
        <fullName>N-acetylhexosamine 1-kinase</fullName>
        <ecNumber>2.7.1.162</ecNumber>
    </recommendedName>
    <alternativeName>
        <fullName>N-acetylgalactosamine/N-acetylglucosamine 1-kinase</fullName>
    </alternativeName>
</protein>
<gene>
    <name type="primary">nahK</name>
    <name type="synonym">lnpB</name>
    <name type="ordered locus">BLLJ_1622</name>
</gene>